<gene>
    <name evidence="1" type="primary">glyS</name>
    <name type="ordered locus">MGAS10750_Spy1495</name>
</gene>
<keyword id="KW-0030">Aminoacyl-tRNA synthetase</keyword>
<keyword id="KW-0067">ATP-binding</keyword>
<keyword id="KW-0963">Cytoplasm</keyword>
<keyword id="KW-0436">Ligase</keyword>
<keyword id="KW-0547">Nucleotide-binding</keyword>
<keyword id="KW-0648">Protein biosynthesis</keyword>
<sequence length="679" mass="74973">MSKNLLIELGLEELPAYVVTPSEKQLGERLATFLTENRLSFEDIQTFSTPRRLAVRVSGLADQQTDLTEDFKGPAKKIALDADGNFSKAAQGFVRGKGLTTDAIEFREVKGEEYVYVTKHEAGKPAKEVLLGVTEVLSAMTFPVSMHWANNSFEYIRPVHTLTVLLNDEALELDFLDIHSGRVSRGHRFLGTETTITSADSYEADLRSQFVIADAKERQEMIVEQIKAIEAAQGVQVDIDADLLNEVLNLVEFPTAFMGSFDAKYLDVPEEVLVTSMKNHQRYFVVRDQEGHLMPNFVSVRNGNDQAIENVIKGNEKVLVARLEDGEFFWREDQKLQIADLVAKLTNVTFHEKIGSLAEHMDRTRVIAASLAKEANLSAEEVTAVDRAAQIYKFDLLTGMVGEFDELQGIMGEKYARLAGEDAAVATAIREHYLPDAAGGALPETKVGAVLALADKLDTLLSFFSVGLIPSGSNDPYALRRATQGIVRILDHFGWRIPMDKLVDSLYDLSFDSLTYANKADVMNFIRARVDKMMGKAVPKDIREAVLESSTFVVPEMLAAAEALVKASHTENYKPAVESLSRAFNLAEKADASVQVDPSLFENEQENTLFAAIQGLTLAGSAAQQLEQVFALSPVINDFFDNTMVMAEDQALKNNRLAILSDLVSKAKAIAAFNQLNTK</sequence>
<reference key="1">
    <citation type="journal article" date="2006" name="Proc. Natl. Acad. Sci. U.S.A.">
        <title>Molecular genetic anatomy of inter- and intraserotype variation in the human bacterial pathogen group A Streptococcus.</title>
        <authorList>
            <person name="Beres S.B."/>
            <person name="Richter E.W."/>
            <person name="Nagiec M.J."/>
            <person name="Sumby P."/>
            <person name="Porcella S.F."/>
            <person name="DeLeo F.R."/>
            <person name="Musser J.M."/>
        </authorList>
    </citation>
    <scope>NUCLEOTIDE SEQUENCE [LARGE SCALE GENOMIC DNA]</scope>
    <source>
        <strain>MGAS10750</strain>
    </source>
</reference>
<evidence type="ECO:0000255" key="1">
    <source>
        <dbReference type="HAMAP-Rule" id="MF_00255"/>
    </source>
</evidence>
<feature type="chain" id="PRO_1000101352" description="Glycine--tRNA ligase beta subunit">
    <location>
        <begin position="1"/>
        <end position="679"/>
    </location>
</feature>
<dbReference type="EC" id="6.1.1.14" evidence="1"/>
<dbReference type="EMBL" id="CP000262">
    <property type="protein sequence ID" value="ABF38445.1"/>
    <property type="molecule type" value="Genomic_DNA"/>
</dbReference>
<dbReference type="SMR" id="Q1J5E1"/>
<dbReference type="KEGG" id="spi:MGAS10750_Spy1495"/>
<dbReference type="HOGENOM" id="CLU_007220_2_2_9"/>
<dbReference type="Proteomes" id="UP000002434">
    <property type="component" value="Chromosome"/>
</dbReference>
<dbReference type="GO" id="GO:0005829">
    <property type="term" value="C:cytosol"/>
    <property type="evidence" value="ECO:0007669"/>
    <property type="project" value="TreeGrafter"/>
</dbReference>
<dbReference type="GO" id="GO:0004814">
    <property type="term" value="F:arginine-tRNA ligase activity"/>
    <property type="evidence" value="ECO:0007669"/>
    <property type="project" value="InterPro"/>
</dbReference>
<dbReference type="GO" id="GO:0005524">
    <property type="term" value="F:ATP binding"/>
    <property type="evidence" value="ECO:0007669"/>
    <property type="project" value="UniProtKB-UniRule"/>
</dbReference>
<dbReference type="GO" id="GO:0004820">
    <property type="term" value="F:glycine-tRNA ligase activity"/>
    <property type="evidence" value="ECO:0007669"/>
    <property type="project" value="UniProtKB-UniRule"/>
</dbReference>
<dbReference type="GO" id="GO:0006420">
    <property type="term" value="P:arginyl-tRNA aminoacylation"/>
    <property type="evidence" value="ECO:0007669"/>
    <property type="project" value="InterPro"/>
</dbReference>
<dbReference type="GO" id="GO:0006426">
    <property type="term" value="P:glycyl-tRNA aminoacylation"/>
    <property type="evidence" value="ECO:0007669"/>
    <property type="project" value="UniProtKB-UniRule"/>
</dbReference>
<dbReference type="HAMAP" id="MF_00255">
    <property type="entry name" value="Gly_tRNA_synth_beta"/>
    <property type="match status" value="1"/>
</dbReference>
<dbReference type="InterPro" id="IPR008909">
    <property type="entry name" value="DALR_anticod-bd"/>
</dbReference>
<dbReference type="InterPro" id="IPR015944">
    <property type="entry name" value="Gly-tRNA-synth_bsu"/>
</dbReference>
<dbReference type="InterPro" id="IPR006194">
    <property type="entry name" value="Gly-tRNA-synth_heterodimer"/>
</dbReference>
<dbReference type="NCBIfam" id="TIGR00211">
    <property type="entry name" value="glyS"/>
    <property type="match status" value="1"/>
</dbReference>
<dbReference type="PANTHER" id="PTHR30075:SF2">
    <property type="entry name" value="GLYCINE--TRNA LIGASE, CHLOROPLASTIC_MITOCHONDRIAL 2"/>
    <property type="match status" value="1"/>
</dbReference>
<dbReference type="PANTHER" id="PTHR30075">
    <property type="entry name" value="GLYCYL-TRNA SYNTHETASE"/>
    <property type="match status" value="1"/>
</dbReference>
<dbReference type="Pfam" id="PF05746">
    <property type="entry name" value="DALR_1"/>
    <property type="match status" value="1"/>
</dbReference>
<dbReference type="Pfam" id="PF02092">
    <property type="entry name" value="tRNA_synt_2f"/>
    <property type="match status" value="1"/>
</dbReference>
<dbReference type="PRINTS" id="PR01045">
    <property type="entry name" value="TRNASYNTHGB"/>
</dbReference>
<dbReference type="SUPFAM" id="SSF109604">
    <property type="entry name" value="HD-domain/PDEase-like"/>
    <property type="match status" value="1"/>
</dbReference>
<dbReference type="PROSITE" id="PS50861">
    <property type="entry name" value="AA_TRNA_LIGASE_II_GLYAB"/>
    <property type="match status" value="1"/>
</dbReference>
<proteinExistence type="inferred from homology"/>
<accession>Q1J5E1</accession>
<protein>
    <recommendedName>
        <fullName evidence="1">Glycine--tRNA ligase beta subunit</fullName>
        <ecNumber evidence="1">6.1.1.14</ecNumber>
    </recommendedName>
    <alternativeName>
        <fullName evidence="1">Glycyl-tRNA synthetase beta subunit</fullName>
        <shortName evidence="1">GlyRS</shortName>
    </alternativeName>
</protein>
<organism>
    <name type="scientific">Streptococcus pyogenes serotype M4 (strain MGAS10750)</name>
    <dbReference type="NCBI Taxonomy" id="370554"/>
    <lineage>
        <taxon>Bacteria</taxon>
        <taxon>Bacillati</taxon>
        <taxon>Bacillota</taxon>
        <taxon>Bacilli</taxon>
        <taxon>Lactobacillales</taxon>
        <taxon>Streptococcaceae</taxon>
        <taxon>Streptococcus</taxon>
    </lineage>
</organism>
<comment type="catalytic activity">
    <reaction evidence="1">
        <text>tRNA(Gly) + glycine + ATP = glycyl-tRNA(Gly) + AMP + diphosphate</text>
        <dbReference type="Rhea" id="RHEA:16013"/>
        <dbReference type="Rhea" id="RHEA-COMP:9664"/>
        <dbReference type="Rhea" id="RHEA-COMP:9683"/>
        <dbReference type="ChEBI" id="CHEBI:30616"/>
        <dbReference type="ChEBI" id="CHEBI:33019"/>
        <dbReference type="ChEBI" id="CHEBI:57305"/>
        <dbReference type="ChEBI" id="CHEBI:78442"/>
        <dbReference type="ChEBI" id="CHEBI:78522"/>
        <dbReference type="ChEBI" id="CHEBI:456215"/>
        <dbReference type="EC" id="6.1.1.14"/>
    </reaction>
</comment>
<comment type="subunit">
    <text evidence="1">Tetramer of two alpha and two beta subunits.</text>
</comment>
<comment type="subcellular location">
    <subcellularLocation>
        <location evidence="1">Cytoplasm</location>
    </subcellularLocation>
</comment>
<comment type="similarity">
    <text evidence="1">Belongs to the class-II aminoacyl-tRNA synthetase family.</text>
</comment>
<name>SYGB_STRPF</name>